<evidence type="ECO:0000305" key="1"/>
<feature type="chain" id="PRO_0000077014" description="Uncharacterized protein bbp_116">
    <location>
        <begin position="1"/>
        <end position="128"/>
    </location>
</feature>
<comment type="similarity">
    <text evidence="1">Belongs to the HesB/IscA family.</text>
</comment>
<gene>
    <name type="ordered locus">bbp_116</name>
</gene>
<dbReference type="EMBL" id="AE016826">
    <property type="protein sequence ID" value="AAO26850.1"/>
    <property type="molecule type" value="Genomic_DNA"/>
</dbReference>
<dbReference type="RefSeq" id="WP_011091251.1">
    <property type="nucleotide sequence ID" value="NC_004545.1"/>
</dbReference>
<dbReference type="SMR" id="Q89AW2"/>
<dbReference type="STRING" id="224915.bbp_116"/>
<dbReference type="KEGG" id="bab:bbp_116"/>
<dbReference type="eggNOG" id="COG0316">
    <property type="taxonomic scope" value="Bacteria"/>
</dbReference>
<dbReference type="HOGENOM" id="CLU_069054_4_2_6"/>
<dbReference type="OrthoDB" id="9801228at2"/>
<dbReference type="Proteomes" id="UP000000601">
    <property type="component" value="Chromosome"/>
</dbReference>
<dbReference type="GO" id="GO:0005829">
    <property type="term" value="C:cytosol"/>
    <property type="evidence" value="ECO:0007669"/>
    <property type="project" value="TreeGrafter"/>
</dbReference>
<dbReference type="GO" id="GO:0051537">
    <property type="term" value="F:2 iron, 2 sulfur cluster binding"/>
    <property type="evidence" value="ECO:0007669"/>
    <property type="project" value="TreeGrafter"/>
</dbReference>
<dbReference type="GO" id="GO:0016226">
    <property type="term" value="P:iron-sulfur cluster assembly"/>
    <property type="evidence" value="ECO:0007669"/>
    <property type="project" value="InterPro"/>
</dbReference>
<dbReference type="Gene3D" id="2.60.300.12">
    <property type="entry name" value="HesB-like domain"/>
    <property type="match status" value="1"/>
</dbReference>
<dbReference type="InterPro" id="IPR050322">
    <property type="entry name" value="Fe-S_cluster_asmbl/transfer"/>
</dbReference>
<dbReference type="InterPro" id="IPR000361">
    <property type="entry name" value="FeS_biogenesis"/>
</dbReference>
<dbReference type="InterPro" id="IPR016092">
    <property type="entry name" value="FeS_cluster_insertion"/>
</dbReference>
<dbReference type="InterPro" id="IPR017870">
    <property type="entry name" value="FeS_cluster_insertion_CS"/>
</dbReference>
<dbReference type="InterPro" id="IPR035903">
    <property type="entry name" value="HesB-like_dom_sf"/>
</dbReference>
<dbReference type="NCBIfam" id="TIGR00049">
    <property type="entry name" value="iron-sulfur cluster assembly accessory protein"/>
    <property type="match status" value="1"/>
</dbReference>
<dbReference type="PANTHER" id="PTHR10072:SF41">
    <property type="entry name" value="IRON-SULFUR CLUSTER ASSEMBLY 1 HOMOLOG, MITOCHONDRIAL"/>
    <property type="match status" value="1"/>
</dbReference>
<dbReference type="PANTHER" id="PTHR10072">
    <property type="entry name" value="IRON-SULFUR CLUSTER ASSEMBLY PROTEIN"/>
    <property type="match status" value="1"/>
</dbReference>
<dbReference type="Pfam" id="PF01521">
    <property type="entry name" value="Fe-S_biosyn"/>
    <property type="match status" value="1"/>
</dbReference>
<dbReference type="SUPFAM" id="SSF89360">
    <property type="entry name" value="HesB-like domain"/>
    <property type="match status" value="1"/>
</dbReference>
<dbReference type="PROSITE" id="PS01152">
    <property type="entry name" value="HESB"/>
    <property type="match status" value="1"/>
</dbReference>
<proteinExistence type="inferred from homology"/>
<sequence>MTHKNSCITLISPQNNKIKNTQGIKITSSAKKQILFLTKKNKKKIKLRLKKTGCAGFKYCMEEVVDTSTNLSEIIFYANDVSIIVNTNELHMLDGVKIDFVKEGLNYSFKFSHTKIKNFCGCGNSFEF</sequence>
<accession>Q89AW2</accession>
<organism>
    <name type="scientific">Buchnera aphidicola subsp. Baizongia pistaciae (strain Bp)</name>
    <dbReference type="NCBI Taxonomy" id="224915"/>
    <lineage>
        <taxon>Bacteria</taxon>
        <taxon>Pseudomonadati</taxon>
        <taxon>Pseudomonadota</taxon>
        <taxon>Gammaproteobacteria</taxon>
        <taxon>Enterobacterales</taxon>
        <taxon>Erwiniaceae</taxon>
        <taxon>Buchnera</taxon>
    </lineage>
</organism>
<keyword id="KW-1185">Reference proteome</keyword>
<reference key="1">
    <citation type="journal article" date="2003" name="Proc. Natl. Acad. Sci. U.S.A.">
        <title>Reductive genome evolution in Buchnera aphidicola.</title>
        <authorList>
            <person name="van Ham R.C.H.J."/>
            <person name="Kamerbeek J."/>
            <person name="Palacios C."/>
            <person name="Rausell C."/>
            <person name="Abascal F."/>
            <person name="Bastolla U."/>
            <person name="Fernandez J.M."/>
            <person name="Jimenez L."/>
            <person name="Postigo M."/>
            <person name="Silva F.J."/>
            <person name="Tamames J."/>
            <person name="Viguera E."/>
            <person name="Latorre A."/>
            <person name="Valencia A."/>
            <person name="Moran F."/>
            <person name="Moya A."/>
        </authorList>
    </citation>
    <scope>NUCLEOTIDE SEQUENCE [LARGE SCALE GENOMIC DNA]</scope>
    <source>
        <strain>Bp</strain>
    </source>
</reference>
<protein>
    <recommendedName>
        <fullName>Uncharacterized protein bbp_116</fullName>
    </recommendedName>
</protein>
<name>Y116_BUCBP</name>